<comment type="function">
    <text evidence="1">Binds 23S rRNA and is also seen to make contacts with the A and possibly P site tRNAs.</text>
</comment>
<comment type="subunit">
    <text evidence="1">Part of the 50S ribosomal subunit.</text>
</comment>
<comment type="similarity">
    <text evidence="1">Belongs to the universal ribosomal protein uL16 family.</text>
</comment>
<keyword id="KW-0687">Ribonucleoprotein</keyword>
<keyword id="KW-0689">Ribosomal protein</keyword>
<keyword id="KW-0694">RNA-binding</keyword>
<keyword id="KW-0699">rRNA-binding</keyword>
<keyword id="KW-0820">tRNA-binding</keyword>
<accession>A6W385</accession>
<evidence type="ECO:0000255" key="1">
    <source>
        <dbReference type="HAMAP-Rule" id="MF_01342"/>
    </source>
</evidence>
<evidence type="ECO:0000305" key="2"/>
<dbReference type="EMBL" id="CP000749">
    <property type="protein sequence ID" value="ABR73164.1"/>
    <property type="molecule type" value="Genomic_DNA"/>
</dbReference>
<dbReference type="SMR" id="A6W385"/>
<dbReference type="STRING" id="400668.Mmwyl1_4269"/>
<dbReference type="KEGG" id="mmw:Mmwyl1_4269"/>
<dbReference type="eggNOG" id="COG0197">
    <property type="taxonomic scope" value="Bacteria"/>
</dbReference>
<dbReference type="HOGENOM" id="CLU_078858_2_1_6"/>
<dbReference type="OrthoDB" id="9802589at2"/>
<dbReference type="GO" id="GO:0022625">
    <property type="term" value="C:cytosolic large ribosomal subunit"/>
    <property type="evidence" value="ECO:0007669"/>
    <property type="project" value="TreeGrafter"/>
</dbReference>
<dbReference type="GO" id="GO:0019843">
    <property type="term" value="F:rRNA binding"/>
    <property type="evidence" value="ECO:0007669"/>
    <property type="project" value="UniProtKB-UniRule"/>
</dbReference>
<dbReference type="GO" id="GO:0003735">
    <property type="term" value="F:structural constituent of ribosome"/>
    <property type="evidence" value="ECO:0007669"/>
    <property type="project" value="InterPro"/>
</dbReference>
<dbReference type="GO" id="GO:0000049">
    <property type="term" value="F:tRNA binding"/>
    <property type="evidence" value="ECO:0007669"/>
    <property type="project" value="UniProtKB-KW"/>
</dbReference>
<dbReference type="GO" id="GO:0006412">
    <property type="term" value="P:translation"/>
    <property type="evidence" value="ECO:0007669"/>
    <property type="project" value="UniProtKB-UniRule"/>
</dbReference>
<dbReference type="CDD" id="cd01433">
    <property type="entry name" value="Ribosomal_L16_L10e"/>
    <property type="match status" value="1"/>
</dbReference>
<dbReference type="FunFam" id="3.90.1170.10:FF:000001">
    <property type="entry name" value="50S ribosomal protein L16"/>
    <property type="match status" value="1"/>
</dbReference>
<dbReference type="Gene3D" id="3.90.1170.10">
    <property type="entry name" value="Ribosomal protein L10e/L16"/>
    <property type="match status" value="1"/>
</dbReference>
<dbReference type="HAMAP" id="MF_01342">
    <property type="entry name" value="Ribosomal_uL16"/>
    <property type="match status" value="1"/>
</dbReference>
<dbReference type="InterPro" id="IPR047873">
    <property type="entry name" value="Ribosomal_uL16"/>
</dbReference>
<dbReference type="InterPro" id="IPR000114">
    <property type="entry name" value="Ribosomal_uL16_bact-type"/>
</dbReference>
<dbReference type="InterPro" id="IPR020798">
    <property type="entry name" value="Ribosomal_uL16_CS"/>
</dbReference>
<dbReference type="InterPro" id="IPR016180">
    <property type="entry name" value="Ribosomal_uL16_dom"/>
</dbReference>
<dbReference type="InterPro" id="IPR036920">
    <property type="entry name" value="Ribosomal_uL16_sf"/>
</dbReference>
<dbReference type="NCBIfam" id="TIGR01164">
    <property type="entry name" value="rplP_bact"/>
    <property type="match status" value="1"/>
</dbReference>
<dbReference type="PANTHER" id="PTHR12220">
    <property type="entry name" value="50S/60S RIBOSOMAL PROTEIN L16"/>
    <property type="match status" value="1"/>
</dbReference>
<dbReference type="PANTHER" id="PTHR12220:SF13">
    <property type="entry name" value="LARGE RIBOSOMAL SUBUNIT PROTEIN UL16M"/>
    <property type="match status" value="1"/>
</dbReference>
<dbReference type="Pfam" id="PF00252">
    <property type="entry name" value="Ribosomal_L16"/>
    <property type="match status" value="1"/>
</dbReference>
<dbReference type="PRINTS" id="PR00060">
    <property type="entry name" value="RIBOSOMALL16"/>
</dbReference>
<dbReference type="SUPFAM" id="SSF54686">
    <property type="entry name" value="Ribosomal protein L16p/L10e"/>
    <property type="match status" value="1"/>
</dbReference>
<dbReference type="PROSITE" id="PS00586">
    <property type="entry name" value="RIBOSOMAL_L16_1"/>
    <property type="match status" value="1"/>
</dbReference>
<protein>
    <recommendedName>
        <fullName evidence="1">Large ribosomal subunit protein uL16</fullName>
    </recommendedName>
    <alternativeName>
        <fullName evidence="2">50S ribosomal protein L16</fullName>
    </alternativeName>
</protein>
<name>RL16_MARMS</name>
<gene>
    <name evidence="1" type="primary">rplP</name>
    <name type="ordered locus">Mmwyl1_4269</name>
</gene>
<organism>
    <name type="scientific">Marinomonas sp. (strain MWYL1)</name>
    <dbReference type="NCBI Taxonomy" id="400668"/>
    <lineage>
        <taxon>Bacteria</taxon>
        <taxon>Pseudomonadati</taxon>
        <taxon>Pseudomonadota</taxon>
        <taxon>Gammaproteobacteria</taxon>
        <taxon>Oceanospirillales</taxon>
        <taxon>Oceanospirillaceae</taxon>
        <taxon>Marinomonas</taxon>
    </lineage>
</organism>
<reference key="1">
    <citation type="submission" date="2007-06" db="EMBL/GenBank/DDBJ databases">
        <title>Complete sequence of Marinomonas sp. MWYL1.</title>
        <authorList>
            <consortium name="US DOE Joint Genome Institute"/>
            <person name="Copeland A."/>
            <person name="Lucas S."/>
            <person name="Lapidus A."/>
            <person name="Barry K."/>
            <person name="Glavina del Rio T."/>
            <person name="Dalin E."/>
            <person name="Tice H."/>
            <person name="Pitluck S."/>
            <person name="Kiss H."/>
            <person name="Brettin T."/>
            <person name="Bruce D."/>
            <person name="Detter J.C."/>
            <person name="Han C."/>
            <person name="Schmutz J."/>
            <person name="Larimer F."/>
            <person name="Land M."/>
            <person name="Hauser L."/>
            <person name="Kyrpides N."/>
            <person name="Kim E."/>
            <person name="Johnston A.W.B."/>
            <person name="Todd J.D."/>
            <person name="Rogers R."/>
            <person name="Wexler M."/>
            <person name="Bond P.L."/>
            <person name="Li Y."/>
            <person name="Richardson P."/>
        </authorList>
    </citation>
    <scope>NUCLEOTIDE SEQUENCE [LARGE SCALE GENOMIC DNA]</scope>
    <source>
        <strain>MWYL1</strain>
    </source>
</reference>
<feature type="chain" id="PRO_1000086762" description="Large ribosomal subunit protein uL16">
    <location>
        <begin position="1"/>
        <end position="137"/>
    </location>
</feature>
<proteinExistence type="inferred from homology"/>
<sequence length="137" mass="15583">MLQPKRTKFRKMQKGRNRGLALRGNQVSFGEFGLKSTERGRLTARQIEAARRAMTRHIKRGGRIWIRVFPDKPITQKPLEVRQGKGKGSVEYWVAQIQPGKMLYEVEGVSEQLAREAFALAAAKLPLSTTFVTRTVM</sequence>